<dbReference type="EMBL" id="JH725181">
    <property type="protein sequence ID" value="EJP62793.1"/>
    <property type="molecule type" value="Genomic_DNA"/>
</dbReference>
<dbReference type="RefSeq" id="XP_008601499.1">
    <property type="nucleotide sequence ID" value="XM_008603277.1"/>
</dbReference>
<dbReference type="FunCoup" id="J5J924">
    <property type="interactions" value="15"/>
</dbReference>
<dbReference type="STRING" id="655819.J5J924"/>
<dbReference type="GeneID" id="19891192"/>
<dbReference type="HOGENOM" id="CLU_008455_8_5_1"/>
<dbReference type="InParanoid" id="J5J924"/>
<dbReference type="OrthoDB" id="3590at474943"/>
<dbReference type="Proteomes" id="UP000002762">
    <property type="component" value="Unassembled WGS sequence"/>
</dbReference>
<dbReference type="GO" id="GO:0005886">
    <property type="term" value="C:plasma membrane"/>
    <property type="evidence" value="ECO:0007669"/>
    <property type="project" value="UniProtKB-SubCell"/>
</dbReference>
<dbReference type="GO" id="GO:0015203">
    <property type="term" value="F:polyamine transmembrane transporter activity"/>
    <property type="evidence" value="ECO:0007669"/>
    <property type="project" value="TreeGrafter"/>
</dbReference>
<dbReference type="GO" id="GO:0010509">
    <property type="term" value="P:intracellular polyamine homeostasis"/>
    <property type="evidence" value="ECO:0007669"/>
    <property type="project" value="TreeGrafter"/>
</dbReference>
<dbReference type="Gene3D" id="1.20.1250.20">
    <property type="entry name" value="MFS general substrate transporter like domains"/>
    <property type="match status" value="1"/>
</dbReference>
<dbReference type="InterPro" id="IPR011701">
    <property type="entry name" value="MFS"/>
</dbReference>
<dbReference type="InterPro" id="IPR020846">
    <property type="entry name" value="MFS_dom"/>
</dbReference>
<dbReference type="InterPro" id="IPR036259">
    <property type="entry name" value="MFS_trans_sf"/>
</dbReference>
<dbReference type="PANTHER" id="PTHR23502">
    <property type="entry name" value="MAJOR FACILITATOR SUPERFAMILY"/>
    <property type="match status" value="1"/>
</dbReference>
<dbReference type="PANTHER" id="PTHR23502:SF5">
    <property type="entry name" value="QUINIDINE RESISTANCE PROTEIN 3"/>
    <property type="match status" value="1"/>
</dbReference>
<dbReference type="Pfam" id="PF07690">
    <property type="entry name" value="MFS_1"/>
    <property type="match status" value="1"/>
</dbReference>
<dbReference type="SUPFAM" id="SSF103473">
    <property type="entry name" value="MFS general substrate transporter"/>
    <property type="match status" value="1"/>
</dbReference>
<dbReference type="PROSITE" id="PS50850">
    <property type="entry name" value="MFS"/>
    <property type="match status" value="1"/>
</dbReference>
<accession>J5J924</accession>
<reference key="1">
    <citation type="journal article" date="2012" name="Sci. Rep.">
        <title>Genomic perspectives on the evolution of fungal entomopathogenicity in Beauveria bassiana.</title>
        <authorList>
            <person name="Xiao G."/>
            <person name="Ying S.-H."/>
            <person name="Zheng P."/>
            <person name="Wang Z.-L."/>
            <person name="Zhang S."/>
            <person name="Xie X.-Q."/>
            <person name="Shang Y."/>
            <person name="St Leger R.J."/>
            <person name="Zhao G.-P."/>
            <person name="Wang C."/>
            <person name="Feng M.-G."/>
        </authorList>
    </citation>
    <scope>NUCLEOTIDE SEQUENCE [LARGE SCALE GENOMIC DNA]</scope>
    <source>
        <strain>ARSEF 2860</strain>
    </source>
</reference>
<reference key="2">
    <citation type="journal article" date="2015" name="Proc. Natl. Acad. Sci. U.S.A.">
        <title>Fungal biosynthesis of the bibenzoquinone oosporein to evade insect immunity.</title>
        <authorList>
            <person name="Feng P."/>
            <person name="Shang Y."/>
            <person name="Cen K."/>
            <person name="Wang C."/>
        </authorList>
    </citation>
    <scope>FUNCTION</scope>
    <scope>DISRUPTION PHENOTYPE</scope>
    <scope>INDUCTION</scope>
</reference>
<gene>
    <name evidence="3" type="primary">OpS2</name>
    <name type="ORF">BBA_08180</name>
</gene>
<protein>
    <recommendedName>
        <fullName evidence="3">MFS transporter OpS2</fullName>
    </recommendedName>
    <alternativeName>
        <fullName evidence="3">Oosporein biosynthesis protein 2</fullName>
    </alternativeName>
</protein>
<organism>
    <name type="scientific">Beauveria bassiana (strain ARSEF 2860)</name>
    <name type="common">White muscardine disease fungus</name>
    <name type="synonym">Tritirachium shiotae</name>
    <dbReference type="NCBI Taxonomy" id="655819"/>
    <lineage>
        <taxon>Eukaryota</taxon>
        <taxon>Fungi</taxon>
        <taxon>Dikarya</taxon>
        <taxon>Ascomycota</taxon>
        <taxon>Pezizomycotina</taxon>
        <taxon>Sordariomycetes</taxon>
        <taxon>Hypocreomycetidae</taxon>
        <taxon>Hypocreales</taxon>
        <taxon>Cordycipitaceae</taxon>
        <taxon>Beauveria</taxon>
    </lineage>
</organism>
<keyword id="KW-1003">Cell membrane</keyword>
<keyword id="KW-0472">Membrane</keyword>
<keyword id="KW-1185">Reference proteome</keyword>
<keyword id="KW-0812">Transmembrane</keyword>
<keyword id="KW-1133">Transmembrane helix</keyword>
<keyword id="KW-0843">Virulence</keyword>
<proteinExistence type="evidence at transcript level"/>
<evidence type="ECO:0000255" key="1"/>
<evidence type="ECO:0000269" key="2">
    <source>
    </source>
</evidence>
<evidence type="ECO:0000303" key="3">
    <source>
    </source>
</evidence>
<evidence type="ECO:0000305" key="4"/>
<comment type="function">
    <text evidence="2">MFS transporter; part of the gene cluster that mediates the biosynthesis of the bibenzoquinone oosporein, a metabolite required for fungal virulence that acts by evading host immunity to facilitate fungal multiplication in insects (PubMed:26305932). The function of this putative MFS transporter remains unclear since its deletion leads to increased oosporein production (PubMed:26305932).</text>
</comment>
<comment type="subcellular location">
    <subcellularLocation>
        <location evidence="4">Cell membrane</location>
        <topology evidence="1">Multi-pass membrane protein</topology>
    </subcellularLocation>
</comment>
<comment type="induction">
    <text evidence="2">Expression is positively regulated by the oosporein cluster specific regulator OpS3 that binds the promoter at a 5'-CGGA-3' motif (PubMed:26305932).</text>
</comment>
<comment type="disruption phenotype">
    <text evidence="2">Significantly increases oosporein production (PubMed:26305932).</text>
</comment>
<comment type="similarity">
    <text evidence="4">Belongs to the major facilitator superfamily.</text>
</comment>
<sequence length="350" mass="37991">MRFLAGGASASVAAVGAGTVADLWEVKRRGTAMGYFFLGPMLGPLVSPIIGGILTQRFGWRSTQWGAVVYGGLVWLSMIFLLPETSSKAVKGKEPAVAENSDDGNVQPVPESCVSRFFKALGRMLVEPFRLVGYLRSPPLFMTCYYASISFACYYILNLAIQRTFSRDPYSFRAIILGLLYIPSALGSIVASVVGGRWTDYVMRREAKAAGRFDESGNPKFRPSDRMCENAWIPAFVFPAALLVFGWTTHEGIFWFAPIVVTFFFGLGNSLIFNTATTMLTEILPGKASNAVALNNLMRNTLSCAAAVATDPLLGAIGTQWLFTGLAVICWASSGVIWALKRHSDKAPSA</sequence>
<feature type="chain" id="PRO_0000438573" description="MFS transporter OpS2">
    <location>
        <begin position="1"/>
        <end position="350"/>
    </location>
</feature>
<feature type="transmembrane region" description="Helical" evidence="1">
    <location>
        <begin position="3"/>
        <end position="23"/>
    </location>
</feature>
<feature type="transmembrane region" description="Helical" evidence="1">
    <location>
        <begin position="34"/>
        <end position="54"/>
    </location>
</feature>
<feature type="transmembrane region" description="Helical" evidence="1">
    <location>
        <begin position="65"/>
        <end position="85"/>
    </location>
</feature>
<feature type="transmembrane region" description="Helical" evidence="1">
    <location>
        <begin position="141"/>
        <end position="161"/>
    </location>
</feature>
<feature type="transmembrane region" description="Helical" evidence="1">
    <location>
        <begin position="174"/>
        <end position="194"/>
    </location>
</feature>
<feature type="transmembrane region" description="Helical" evidence="1">
    <location>
        <begin position="227"/>
        <end position="247"/>
    </location>
</feature>
<feature type="transmembrane region" description="Helical" evidence="1">
    <location>
        <begin position="253"/>
        <end position="273"/>
    </location>
</feature>
<feature type="transmembrane region" description="Helical" evidence="1">
    <location>
        <begin position="312"/>
        <end position="332"/>
    </location>
</feature>
<name>OPS2_BEAB2</name>